<feature type="chain" id="PRO_0000292409" description="Transcription factor Atoh7-a">
    <location>
        <begin position="1"/>
        <end position="138"/>
    </location>
</feature>
<feature type="domain" description="bHLH" evidence="3">
    <location>
        <begin position="33"/>
        <end position="85"/>
    </location>
</feature>
<evidence type="ECO:0000250" key="1">
    <source>
        <dbReference type="UniProtKB" id="Q8N100"/>
    </source>
</evidence>
<evidence type="ECO:0000250" key="2">
    <source>
        <dbReference type="UniProtKB" id="Q9Z2E5"/>
    </source>
</evidence>
<evidence type="ECO:0000255" key="3">
    <source>
        <dbReference type="PROSITE-ProRule" id="PRU00981"/>
    </source>
</evidence>
<evidence type="ECO:0000269" key="4">
    <source>
    </source>
</evidence>
<evidence type="ECO:0000269" key="5">
    <source>
    </source>
</evidence>
<evidence type="ECO:0000269" key="6">
    <source>
    </source>
</evidence>
<evidence type="ECO:0000269" key="7">
    <source>
    </source>
</evidence>
<evidence type="ECO:0000303" key="8">
    <source>
    </source>
</evidence>
<evidence type="ECO:0000303" key="9">
    <source>
    </source>
</evidence>
<evidence type="ECO:0000305" key="10"/>
<sequence length="138" mass="16212">MKSDSPVHRESHTGCQSPCPLRCLPARLEGSTKRRLAANARERRRMQGLNTAFDSLRKVVPQWGEDKQLSKYETLQMALSYIMALSRILSEAERYSRTDPEEWTNIQYDHIEEEQCLSYMEVRCPRDCDRYLPQTFSH</sequence>
<gene>
    <name evidence="10" type="primary">atoh7-a</name>
    <name evidence="10" type="synonym">ath5-a</name>
</gene>
<protein>
    <recommendedName>
        <fullName evidence="2">Transcription factor Atoh7-a</fullName>
    </recommendedName>
    <alternativeName>
        <fullName evidence="2">Atonal bHLH transcription factor 7-A</fullName>
    </alternativeName>
    <alternativeName>
        <fullName evidence="8">Helix-loop-helix protein xATH-5-A</fullName>
    </alternativeName>
    <alternativeName>
        <fullName evidence="9">Protein atonal homolog 5-A</fullName>
        <shortName evidence="9">xAth5-A</shortName>
    </alternativeName>
    <alternativeName>
        <fullName>Protein atonal homolog 7-A</fullName>
    </alternativeName>
</protein>
<proteinExistence type="evidence at protein level"/>
<name>ATO7A_XENLA</name>
<reference key="1">
    <citation type="journal article" date="1997" name="Neuron">
        <title>Xath5 participates in a network of bHLH genes in the developing Xenopus retina.</title>
        <authorList>
            <person name="Kanekar S."/>
            <person name="Perron M."/>
            <person name="Dorsky R."/>
            <person name="Harris W.A."/>
            <person name="Jan L.Y."/>
            <person name="Jan Y.N."/>
            <person name="Vetter M.L."/>
        </authorList>
    </citation>
    <scope>NUCLEOTIDE SEQUENCE [MRNA]</scope>
    <scope>DEVELOPMENTAL STAGE</scope>
    <scope>FUNCTION IN RETINA DEVELOPMENT</scope>
    <source>
        <tissue>Head</tissue>
    </source>
</reference>
<reference key="2">
    <citation type="journal article" date="1997" name="Neuron">
        <authorList>
            <person name="Kanekar S."/>
            <person name="Perron M."/>
            <person name="Dorsky R."/>
            <person name="Harris W.A."/>
            <person name="Jan L.Y."/>
            <person name="Jan Y.N."/>
            <person name="Vetter M.L."/>
        </authorList>
    </citation>
    <scope>ERRATUM OF PUBMED:9390513</scope>
</reference>
<reference key="3">
    <citation type="journal article" date="2001" name="Dev. Biol.">
        <title>The bHLH factors Xath5 and XNeuroD can upregulate the expression of XBrn3d, a POU-homeodomain transcription factor.</title>
        <authorList>
            <person name="Hutcheson D.A."/>
            <person name="Vetter M.L."/>
        </authorList>
    </citation>
    <scope>DEVELOPMENTAL STAGE</scope>
    <scope>FUNCTION</scope>
</reference>
<reference key="4">
    <citation type="journal article" date="2001" name="Mol. Cell. Neurosci.">
        <title>Notch signaling can inhibit Xath5 function in the neural plate and developing retina.</title>
        <authorList>
            <person name="Schneider M.L."/>
            <person name="Turner D.L."/>
            <person name="Vetter M.L."/>
        </authorList>
    </citation>
    <scope>INHIBITION BY NOTCH AND ESR1</scope>
</reference>
<reference key="5">
    <citation type="journal article" date="2002" name="Dev. Dyn.">
        <title>Xath5 regulates neurogenesis in the Xenopus olfactory placode.</title>
        <authorList>
            <person name="Burns C.J."/>
            <person name="Vetter M.L."/>
        </authorList>
    </citation>
    <scope>FUNCTION IN OLFACTORY NEURON DEVELOPMENT</scope>
    <scope>DEVELOPMENTAL STAGE</scope>
</reference>
<reference key="6">
    <citation type="journal article" date="2005" name="Dev. Biol.">
        <title>Identification of shared transcriptional targets for the proneural bHLH factors Xath5 and XNeuroD.</title>
        <authorList>
            <person name="Logan M.A."/>
            <person name="Steele M.R."/>
            <person name="Van Raay T.J."/>
            <person name="Vetter M.L."/>
        </authorList>
    </citation>
    <scope>FUNCTION</scope>
</reference>
<keyword id="KW-0966">Cell projection</keyword>
<keyword id="KW-0217">Developmental protein</keyword>
<keyword id="KW-0221">Differentiation</keyword>
<keyword id="KW-0238">DNA-binding</keyword>
<keyword id="KW-0524">Neurogenesis</keyword>
<keyword id="KW-0539">Nucleus</keyword>
<keyword id="KW-1185">Reference proteome</keyword>
<keyword id="KW-0804">Transcription</keyword>
<keyword id="KW-0805">Transcription regulation</keyword>
<comment type="function">
    <text evidence="2 4 5 6 7">Transcription factor that binds to DNA at the consensus sequence 5'-CAG[GC]TG-3' (By similarity). Positively regulates the determination of retinal ganglion cell fate and formation of the optic nerve and retino-hypothalamic tract (PubMed:9390513). Required for retinal circadian rhythm photoentrainment (By similarity). Plays a role in brainstem auditory signaling and binaural processing (By similarity). Regulates the differentiation of olfactory receptor neurons (PubMed:12454929). During retinal neurogenesis, activates the transcription of several genes such as brn3d, coe3, cbfa2t2, glis2, elrC and xgadd45-gamma (PubMed:11401395, PubMed:16112102).</text>
</comment>
<comment type="subcellular location">
    <subcellularLocation>
        <location evidence="1">Nucleus</location>
    </subcellularLocation>
    <subcellularLocation>
        <location evidence="2">Perikaryon</location>
    </subcellularLocation>
    <subcellularLocation>
        <location evidence="2">Cell projection</location>
        <location evidence="2">Axon</location>
    </subcellularLocation>
</comment>
<comment type="developmental stage">
    <text evidence="4 5 7">First detected at stage 17 as 2 symmetric patches in the region of the presumptive olfactory placode. Expressed in the pineal at stage 23, and in the eye starting from stage 24. By stage 27, strongly expressed in retina, olfactory placodes and pineal. At stage 32, expression strongly decreases in olfactory placodes and pineal but is maintained in the neuroretina. At stage 41, expression is restricted to the ciliary marginal zone of the retina.</text>
</comment>
<comment type="miscellaneous">
    <text>Inhibited by Notch and ESR1.</text>
</comment>
<accession>O13125</accession>
<organism>
    <name type="scientific">Xenopus laevis</name>
    <name type="common">African clawed frog</name>
    <dbReference type="NCBI Taxonomy" id="8355"/>
    <lineage>
        <taxon>Eukaryota</taxon>
        <taxon>Metazoa</taxon>
        <taxon>Chordata</taxon>
        <taxon>Craniata</taxon>
        <taxon>Vertebrata</taxon>
        <taxon>Euteleostomi</taxon>
        <taxon>Amphibia</taxon>
        <taxon>Batrachia</taxon>
        <taxon>Anura</taxon>
        <taxon>Pipoidea</taxon>
        <taxon>Pipidae</taxon>
        <taxon>Xenopodinae</taxon>
        <taxon>Xenopus</taxon>
        <taxon>Xenopus</taxon>
    </lineage>
</organism>
<dbReference type="EMBL" id="U93170">
    <property type="protein sequence ID" value="AAB58668.1"/>
    <property type="molecule type" value="mRNA"/>
</dbReference>
<dbReference type="RefSeq" id="NP_001079289.1">
    <property type="nucleotide sequence ID" value="NM_001085820.1"/>
</dbReference>
<dbReference type="SMR" id="O13125"/>
<dbReference type="GeneID" id="378576"/>
<dbReference type="KEGG" id="xla:378576"/>
<dbReference type="AGR" id="Xenbase:XB-GENE-6252646"/>
<dbReference type="CTD" id="378576"/>
<dbReference type="Xenbase" id="XB-GENE-6252646">
    <property type="gene designation" value="atoh7.S"/>
</dbReference>
<dbReference type="OrthoDB" id="6161578at2759"/>
<dbReference type="Proteomes" id="UP000186698">
    <property type="component" value="Chromosome 7S"/>
</dbReference>
<dbReference type="Bgee" id="378576">
    <property type="expression patterns" value="Expressed in embryo and 1 other cell type or tissue"/>
</dbReference>
<dbReference type="GO" id="GO:0030424">
    <property type="term" value="C:axon"/>
    <property type="evidence" value="ECO:0000250"/>
    <property type="project" value="UniProtKB"/>
</dbReference>
<dbReference type="GO" id="GO:0005634">
    <property type="term" value="C:nucleus"/>
    <property type="evidence" value="ECO:0000250"/>
    <property type="project" value="UniProtKB"/>
</dbReference>
<dbReference type="GO" id="GO:0043204">
    <property type="term" value="C:perikaryon"/>
    <property type="evidence" value="ECO:0000250"/>
    <property type="project" value="UniProtKB"/>
</dbReference>
<dbReference type="GO" id="GO:0000981">
    <property type="term" value="F:DNA-binding transcription factor activity, RNA polymerase II-specific"/>
    <property type="evidence" value="ECO:0000318"/>
    <property type="project" value="GO_Central"/>
</dbReference>
<dbReference type="GO" id="GO:0070888">
    <property type="term" value="F:E-box binding"/>
    <property type="evidence" value="ECO:0000318"/>
    <property type="project" value="GO_Central"/>
</dbReference>
<dbReference type="GO" id="GO:0046983">
    <property type="term" value="F:protein dimerization activity"/>
    <property type="evidence" value="ECO:0007669"/>
    <property type="project" value="InterPro"/>
</dbReference>
<dbReference type="GO" id="GO:0000976">
    <property type="term" value="F:transcription cis-regulatory region binding"/>
    <property type="evidence" value="ECO:0000250"/>
    <property type="project" value="UniProtKB"/>
</dbReference>
<dbReference type="GO" id="GO:0061564">
    <property type="term" value="P:axon development"/>
    <property type="evidence" value="ECO:0000318"/>
    <property type="project" value="GO_Central"/>
</dbReference>
<dbReference type="GO" id="GO:0003407">
    <property type="term" value="P:neural retina development"/>
    <property type="evidence" value="ECO:0007669"/>
    <property type="project" value="InterPro"/>
</dbReference>
<dbReference type="GO" id="GO:0048663">
    <property type="term" value="P:neuron fate commitment"/>
    <property type="evidence" value="ECO:0000318"/>
    <property type="project" value="GO_Central"/>
</dbReference>
<dbReference type="GO" id="GO:1902336">
    <property type="term" value="P:positive regulation of retinal ganglion cell axon guidance"/>
    <property type="evidence" value="ECO:0000250"/>
    <property type="project" value="UniProtKB"/>
</dbReference>
<dbReference type="GO" id="GO:0045944">
    <property type="term" value="P:positive regulation of transcription by RNA polymerase II"/>
    <property type="evidence" value="ECO:0000318"/>
    <property type="project" value="GO_Central"/>
</dbReference>
<dbReference type="GO" id="GO:0006357">
    <property type="term" value="P:regulation of transcription by RNA polymerase II"/>
    <property type="evidence" value="ECO:0000250"/>
    <property type="project" value="UniProtKB"/>
</dbReference>
<dbReference type="GO" id="GO:0007423">
    <property type="term" value="P:sensory organ development"/>
    <property type="evidence" value="ECO:0000318"/>
    <property type="project" value="GO_Central"/>
</dbReference>
<dbReference type="CDD" id="cd19714">
    <property type="entry name" value="bHLH_TS_ATOH7"/>
    <property type="match status" value="1"/>
</dbReference>
<dbReference type="FunFam" id="4.10.280.10:FF:000025">
    <property type="entry name" value="protein atonal homolog 7"/>
    <property type="match status" value="1"/>
</dbReference>
<dbReference type="Gene3D" id="4.10.280.10">
    <property type="entry name" value="Helix-loop-helix DNA-binding domain"/>
    <property type="match status" value="1"/>
</dbReference>
<dbReference type="InterPro" id="IPR032663">
    <property type="entry name" value="ATOH7_bHLH"/>
</dbReference>
<dbReference type="InterPro" id="IPR011598">
    <property type="entry name" value="bHLH_dom"/>
</dbReference>
<dbReference type="InterPro" id="IPR050359">
    <property type="entry name" value="bHLH_transcription_factors"/>
</dbReference>
<dbReference type="InterPro" id="IPR036638">
    <property type="entry name" value="HLH_DNA-bd_sf"/>
</dbReference>
<dbReference type="PANTHER" id="PTHR19290">
    <property type="entry name" value="BASIC HELIX-LOOP-HELIX PROTEIN NEUROGENIN-RELATED"/>
    <property type="match status" value="1"/>
</dbReference>
<dbReference type="PANTHER" id="PTHR19290:SF162">
    <property type="entry name" value="TRANSCRIPTION FACTOR ATOH7"/>
    <property type="match status" value="1"/>
</dbReference>
<dbReference type="Pfam" id="PF00010">
    <property type="entry name" value="HLH"/>
    <property type="match status" value="1"/>
</dbReference>
<dbReference type="SMART" id="SM00353">
    <property type="entry name" value="HLH"/>
    <property type="match status" value="1"/>
</dbReference>
<dbReference type="SUPFAM" id="SSF47459">
    <property type="entry name" value="HLH, helix-loop-helix DNA-binding domain"/>
    <property type="match status" value="1"/>
</dbReference>
<dbReference type="PROSITE" id="PS50888">
    <property type="entry name" value="BHLH"/>
    <property type="match status" value="1"/>
</dbReference>